<dbReference type="EC" id="6.1.1.14"/>
<dbReference type="EMBL" id="BA000003">
    <property type="protein sequence ID" value="BAB12853.1"/>
    <property type="molecule type" value="Genomic_DNA"/>
</dbReference>
<dbReference type="RefSeq" id="NP_239967.1">
    <property type="nucleotide sequence ID" value="NC_002528.1"/>
</dbReference>
<dbReference type="RefSeq" id="WP_009874091.1">
    <property type="nucleotide sequence ID" value="NC_002528.1"/>
</dbReference>
<dbReference type="SMR" id="P57235"/>
<dbReference type="STRING" id="563178.BUAP5A_133"/>
<dbReference type="EnsemblBacteria" id="BAB12853">
    <property type="protein sequence ID" value="BAB12853"/>
    <property type="gene ID" value="BAB12853"/>
</dbReference>
<dbReference type="KEGG" id="buc:BU135"/>
<dbReference type="PATRIC" id="fig|107806.10.peg.144"/>
<dbReference type="eggNOG" id="COG0751">
    <property type="taxonomic scope" value="Bacteria"/>
</dbReference>
<dbReference type="HOGENOM" id="CLU_007220_2_2_6"/>
<dbReference type="Proteomes" id="UP000001806">
    <property type="component" value="Chromosome"/>
</dbReference>
<dbReference type="GO" id="GO:0005829">
    <property type="term" value="C:cytosol"/>
    <property type="evidence" value="ECO:0007669"/>
    <property type="project" value="TreeGrafter"/>
</dbReference>
<dbReference type="GO" id="GO:0004814">
    <property type="term" value="F:arginine-tRNA ligase activity"/>
    <property type="evidence" value="ECO:0007669"/>
    <property type="project" value="InterPro"/>
</dbReference>
<dbReference type="GO" id="GO:0005524">
    <property type="term" value="F:ATP binding"/>
    <property type="evidence" value="ECO:0007669"/>
    <property type="project" value="UniProtKB-UniRule"/>
</dbReference>
<dbReference type="GO" id="GO:0004820">
    <property type="term" value="F:glycine-tRNA ligase activity"/>
    <property type="evidence" value="ECO:0007669"/>
    <property type="project" value="UniProtKB-UniRule"/>
</dbReference>
<dbReference type="GO" id="GO:0006420">
    <property type="term" value="P:arginyl-tRNA aminoacylation"/>
    <property type="evidence" value="ECO:0007669"/>
    <property type="project" value="InterPro"/>
</dbReference>
<dbReference type="GO" id="GO:0006426">
    <property type="term" value="P:glycyl-tRNA aminoacylation"/>
    <property type="evidence" value="ECO:0007669"/>
    <property type="project" value="UniProtKB-UniRule"/>
</dbReference>
<dbReference type="HAMAP" id="MF_00255">
    <property type="entry name" value="Gly_tRNA_synth_beta"/>
    <property type="match status" value="1"/>
</dbReference>
<dbReference type="InterPro" id="IPR008909">
    <property type="entry name" value="DALR_anticod-bd"/>
</dbReference>
<dbReference type="InterPro" id="IPR015944">
    <property type="entry name" value="Gly-tRNA-synth_bsu"/>
</dbReference>
<dbReference type="InterPro" id="IPR006194">
    <property type="entry name" value="Gly-tRNA-synth_heterodimer"/>
</dbReference>
<dbReference type="NCBIfam" id="TIGR00211">
    <property type="entry name" value="glyS"/>
    <property type="match status" value="1"/>
</dbReference>
<dbReference type="PANTHER" id="PTHR30075:SF2">
    <property type="entry name" value="GLYCINE--TRNA LIGASE, CHLOROPLASTIC_MITOCHONDRIAL 2"/>
    <property type="match status" value="1"/>
</dbReference>
<dbReference type="PANTHER" id="PTHR30075">
    <property type="entry name" value="GLYCYL-TRNA SYNTHETASE"/>
    <property type="match status" value="1"/>
</dbReference>
<dbReference type="Pfam" id="PF05746">
    <property type="entry name" value="DALR_1"/>
    <property type="match status" value="1"/>
</dbReference>
<dbReference type="Pfam" id="PF02092">
    <property type="entry name" value="tRNA_synt_2f"/>
    <property type="match status" value="1"/>
</dbReference>
<dbReference type="PRINTS" id="PR01045">
    <property type="entry name" value="TRNASYNTHGB"/>
</dbReference>
<dbReference type="SUPFAM" id="SSF109604">
    <property type="entry name" value="HD-domain/PDEase-like"/>
    <property type="match status" value="1"/>
</dbReference>
<dbReference type="PROSITE" id="PS50861">
    <property type="entry name" value="AA_TRNA_LIGASE_II_GLYAB"/>
    <property type="match status" value="1"/>
</dbReference>
<evidence type="ECO:0000250" key="1"/>
<evidence type="ECO:0000305" key="2"/>
<gene>
    <name type="primary">glyS</name>
    <name type="ordered locus">BU135</name>
</gene>
<sequence length="690" mass="80803">MTKKILLIEIGTEELPARLLSKISLYFYKNFIKELDFHNISYKNIKYFSTPRRLALKIKDIDITERFVEIKKRGPSIINSYDKDGFLTEAATRWLKHCGININQAIRLKNEKGEWLFYKTRKKQENIESLIPKITESALKNISIKKSMRWGQDNQKFSRPIRNIVILLDKKVIPGDVFNITSKNLLQNHLSSKDSQIKIKDAKDYPKILLEKNNIIADYFIRKEKIIEDIENIAKKIKGFIKKNNVLIEEVTALVESPKALLVNFQEKFLQIPKKILINTIEKKQKCFPIYNSEKKLLPYFIFISNIQTQESEKIIIGNQRVMHARLSDAEFFFKNDRKVKLESRLLSLKKVLFQNNLGSLYEKTLRIKLLIKWIAKYSSSDVEDSIRAALLSKCDLVTDVVCEFPELQGKIGMYYALEDKEKKDVATALEEQYLPRFSGDKLPCTPIGCGLSIADKMDTLSGMFYIGNIPSSDKDPFALRRLAIGIIRIILEKNIPLNLEDLIKKSLSLYNKKNEDDLILFDKMIKFFMIRLFHWYEETGYSAKIIKSVLSCKSIELIDIHKKIQAISFFKKLKDSQSIILSIKRISNILAKEKEKINGDINKKLMIEKEEIILFNNIEEFDNYTKNLFLEKKYNDILIKIKSFENPIYNFFKKVKIYHSDSKIRLNRLLLLSKLKKIFFKIADFSYLY</sequence>
<organism>
    <name type="scientific">Buchnera aphidicola subsp. Acyrthosiphon pisum (strain APS)</name>
    <name type="common">Acyrthosiphon pisum symbiotic bacterium</name>
    <dbReference type="NCBI Taxonomy" id="107806"/>
    <lineage>
        <taxon>Bacteria</taxon>
        <taxon>Pseudomonadati</taxon>
        <taxon>Pseudomonadota</taxon>
        <taxon>Gammaproteobacteria</taxon>
        <taxon>Enterobacterales</taxon>
        <taxon>Erwiniaceae</taxon>
        <taxon>Buchnera</taxon>
    </lineage>
</organism>
<accession>P57235</accession>
<name>SYGB_BUCAI</name>
<reference key="1">
    <citation type="journal article" date="2000" name="Nature">
        <title>Genome sequence of the endocellular bacterial symbiont of aphids Buchnera sp. APS.</title>
        <authorList>
            <person name="Shigenobu S."/>
            <person name="Watanabe H."/>
            <person name="Hattori M."/>
            <person name="Sakaki Y."/>
            <person name="Ishikawa H."/>
        </authorList>
    </citation>
    <scope>NUCLEOTIDE SEQUENCE [LARGE SCALE GENOMIC DNA]</scope>
    <source>
        <strain>APS</strain>
    </source>
</reference>
<proteinExistence type="inferred from homology"/>
<protein>
    <recommendedName>
        <fullName>Glycine--tRNA ligase beta subunit</fullName>
        <ecNumber>6.1.1.14</ecNumber>
    </recommendedName>
    <alternativeName>
        <fullName>Glycyl-tRNA synthetase beta subunit</fullName>
        <shortName>GlyRS</shortName>
    </alternativeName>
</protein>
<feature type="chain" id="PRO_0000072895" description="Glycine--tRNA ligase beta subunit">
    <location>
        <begin position="1"/>
        <end position="690"/>
    </location>
</feature>
<keyword id="KW-0030">Aminoacyl-tRNA synthetase</keyword>
<keyword id="KW-0067">ATP-binding</keyword>
<keyword id="KW-0963">Cytoplasm</keyword>
<keyword id="KW-0436">Ligase</keyword>
<keyword id="KW-0547">Nucleotide-binding</keyword>
<keyword id="KW-0648">Protein biosynthesis</keyword>
<keyword id="KW-1185">Reference proteome</keyword>
<comment type="catalytic activity">
    <reaction>
        <text>tRNA(Gly) + glycine + ATP = glycyl-tRNA(Gly) + AMP + diphosphate</text>
        <dbReference type="Rhea" id="RHEA:16013"/>
        <dbReference type="Rhea" id="RHEA-COMP:9664"/>
        <dbReference type="Rhea" id="RHEA-COMP:9683"/>
        <dbReference type="ChEBI" id="CHEBI:30616"/>
        <dbReference type="ChEBI" id="CHEBI:33019"/>
        <dbReference type="ChEBI" id="CHEBI:57305"/>
        <dbReference type="ChEBI" id="CHEBI:78442"/>
        <dbReference type="ChEBI" id="CHEBI:78522"/>
        <dbReference type="ChEBI" id="CHEBI:456215"/>
        <dbReference type="EC" id="6.1.1.14"/>
    </reaction>
</comment>
<comment type="subunit">
    <text evidence="1">Tetramer of two alpha and two beta subunits.</text>
</comment>
<comment type="subcellular location">
    <subcellularLocation>
        <location evidence="1">Cytoplasm</location>
    </subcellularLocation>
</comment>
<comment type="similarity">
    <text evidence="2">Belongs to the class-II aminoacyl-tRNA synthetase family.</text>
</comment>